<sequence length="121" mass="12341">MSITKDQIIEAVSAMSVMDVVELISAMEEKFGVSAAAAVAVAAGPVEAAEEKTEFDVILKAAGANKVAVIKAVRGATGLGLKEAKDLVESAPAALKEGISKDDAEALKKSLEEAGAEVEVK</sequence>
<gene>
    <name evidence="1" type="primary">rplL</name>
    <name type="ordered locus">KPN78578_42990</name>
    <name type="ORF">KPN_04364</name>
</gene>
<accession>A6TGN9</accession>
<comment type="function">
    <text evidence="1">Forms part of the ribosomal stalk which helps the ribosome interact with GTP-bound translation factors. Is thus essential for accurate translation.</text>
</comment>
<comment type="subunit">
    <text evidence="1">Homodimer. Part of the ribosomal stalk of the 50S ribosomal subunit. Forms a multimeric L10(L12)X complex, where L10 forms an elongated spine to which 2 to 4 L12 dimers bind in a sequential fashion. Binds GTP-bound translation factors.</text>
</comment>
<comment type="similarity">
    <text evidence="1">Belongs to the bacterial ribosomal protein bL12 family.</text>
</comment>
<reference key="1">
    <citation type="submission" date="2006-09" db="EMBL/GenBank/DDBJ databases">
        <authorList>
            <consortium name="The Klebsiella pneumonia Genome Sequencing Project"/>
            <person name="McClelland M."/>
            <person name="Sanderson E.K."/>
            <person name="Spieth J."/>
            <person name="Clifton W.S."/>
            <person name="Latreille P."/>
            <person name="Sabo A."/>
            <person name="Pepin K."/>
            <person name="Bhonagiri V."/>
            <person name="Porwollik S."/>
            <person name="Ali J."/>
            <person name="Wilson R.K."/>
        </authorList>
    </citation>
    <scope>NUCLEOTIDE SEQUENCE [LARGE SCALE GENOMIC DNA]</scope>
    <source>
        <strain>ATCC 700721 / MGH 78578</strain>
    </source>
</reference>
<proteinExistence type="inferred from homology"/>
<keyword id="KW-0687">Ribonucleoprotein</keyword>
<keyword id="KW-0689">Ribosomal protein</keyword>
<evidence type="ECO:0000255" key="1">
    <source>
        <dbReference type="HAMAP-Rule" id="MF_00368"/>
    </source>
</evidence>
<evidence type="ECO:0000305" key="2"/>
<protein>
    <recommendedName>
        <fullName evidence="1">Large ribosomal subunit protein bL12</fullName>
    </recommendedName>
    <alternativeName>
        <fullName evidence="2">50S ribosomal protein L7/L12</fullName>
    </alternativeName>
</protein>
<feature type="chain" id="PRO_1000007024" description="Large ribosomal subunit protein bL12">
    <location>
        <begin position="1"/>
        <end position="121"/>
    </location>
</feature>
<dbReference type="EMBL" id="CP000647">
    <property type="protein sequence ID" value="ABR79723.1"/>
    <property type="molecule type" value="Genomic_DNA"/>
</dbReference>
<dbReference type="RefSeq" id="WP_002884142.1">
    <property type="nucleotide sequence ID" value="NC_009648.1"/>
</dbReference>
<dbReference type="BMRB" id="A6TGN9"/>
<dbReference type="SMR" id="A6TGN9"/>
<dbReference type="STRING" id="272620.KPN_04364"/>
<dbReference type="jPOST" id="A6TGN9"/>
<dbReference type="PaxDb" id="272620-KPN_04364"/>
<dbReference type="EnsemblBacteria" id="ABR79723">
    <property type="protein sequence ID" value="ABR79723"/>
    <property type="gene ID" value="KPN_04364"/>
</dbReference>
<dbReference type="GeneID" id="93275630"/>
<dbReference type="KEGG" id="kpn:KPN_04364"/>
<dbReference type="HOGENOM" id="CLU_086499_3_2_6"/>
<dbReference type="Proteomes" id="UP000000265">
    <property type="component" value="Chromosome"/>
</dbReference>
<dbReference type="GO" id="GO:0022625">
    <property type="term" value="C:cytosolic large ribosomal subunit"/>
    <property type="evidence" value="ECO:0007669"/>
    <property type="project" value="TreeGrafter"/>
</dbReference>
<dbReference type="GO" id="GO:0003729">
    <property type="term" value="F:mRNA binding"/>
    <property type="evidence" value="ECO:0007669"/>
    <property type="project" value="TreeGrafter"/>
</dbReference>
<dbReference type="GO" id="GO:0003735">
    <property type="term" value="F:structural constituent of ribosome"/>
    <property type="evidence" value="ECO:0007669"/>
    <property type="project" value="InterPro"/>
</dbReference>
<dbReference type="GO" id="GO:0006412">
    <property type="term" value="P:translation"/>
    <property type="evidence" value="ECO:0007669"/>
    <property type="project" value="UniProtKB-UniRule"/>
</dbReference>
<dbReference type="CDD" id="cd00387">
    <property type="entry name" value="Ribosomal_L7_L12"/>
    <property type="match status" value="1"/>
</dbReference>
<dbReference type="FunFam" id="1.20.5.710:FF:000001">
    <property type="entry name" value="50S ribosomal protein L7/L12"/>
    <property type="match status" value="1"/>
</dbReference>
<dbReference type="FunFam" id="3.30.1390.10:FF:000001">
    <property type="entry name" value="50S ribosomal protein L7/L12"/>
    <property type="match status" value="1"/>
</dbReference>
<dbReference type="Gene3D" id="3.30.1390.10">
    <property type="match status" value="1"/>
</dbReference>
<dbReference type="Gene3D" id="1.20.5.710">
    <property type="entry name" value="Single helix bin"/>
    <property type="match status" value="1"/>
</dbReference>
<dbReference type="HAMAP" id="MF_00368">
    <property type="entry name" value="Ribosomal_bL12"/>
    <property type="match status" value="1"/>
</dbReference>
<dbReference type="InterPro" id="IPR000206">
    <property type="entry name" value="Ribosomal_bL12"/>
</dbReference>
<dbReference type="InterPro" id="IPR013823">
    <property type="entry name" value="Ribosomal_bL12_C"/>
</dbReference>
<dbReference type="InterPro" id="IPR014719">
    <property type="entry name" value="Ribosomal_bL12_C/ClpS-like"/>
</dbReference>
<dbReference type="InterPro" id="IPR008932">
    <property type="entry name" value="Ribosomal_bL12_oligo"/>
</dbReference>
<dbReference type="InterPro" id="IPR036235">
    <property type="entry name" value="Ribosomal_bL12_oligo_N_sf"/>
</dbReference>
<dbReference type="NCBIfam" id="TIGR00855">
    <property type="entry name" value="L12"/>
    <property type="match status" value="1"/>
</dbReference>
<dbReference type="PANTHER" id="PTHR45987">
    <property type="entry name" value="39S RIBOSOMAL PROTEIN L12"/>
    <property type="match status" value="1"/>
</dbReference>
<dbReference type="PANTHER" id="PTHR45987:SF4">
    <property type="entry name" value="LARGE RIBOSOMAL SUBUNIT PROTEIN BL12M"/>
    <property type="match status" value="1"/>
</dbReference>
<dbReference type="Pfam" id="PF00542">
    <property type="entry name" value="Ribosomal_L12"/>
    <property type="match status" value="1"/>
</dbReference>
<dbReference type="Pfam" id="PF16320">
    <property type="entry name" value="Ribosomal_L12_N"/>
    <property type="match status" value="1"/>
</dbReference>
<dbReference type="SUPFAM" id="SSF54736">
    <property type="entry name" value="ClpS-like"/>
    <property type="match status" value="1"/>
</dbReference>
<dbReference type="SUPFAM" id="SSF48300">
    <property type="entry name" value="Ribosomal protein L7/12, oligomerisation (N-terminal) domain"/>
    <property type="match status" value="1"/>
</dbReference>
<name>RL7_KLEP7</name>
<organism>
    <name type="scientific">Klebsiella pneumoniae subsp. pneumoniae (strain ATCC 700721 / MGH 78578)</name>
    <dbReference type="NCBI Taxonomy" id="272620"/>
    <lineage>
        <taxon>Bacteria</taxon>
        <taxon>Pseudomonadati</taxon>
        <taxon>Pseudomonadota</taxon>
        <taxon>Gammaproteobacteria</taxon>
        <taxon>Enterobacterales</taxon>
        <taxon>Enterobacteriaceae</taxon>
        <taxon>Klebsiella/Raoultella group</taxon>
        <taxon>Klebsiella</taxon>
        <taxon>Klebsiella pneumoniae complex</taxon>
    </lineage>
</organism>